<organism>
    <name type="scientific">Pediculus humanus subsp. corporis</name>
    <name type="common">Body louse</name>
    <dbReference type="NCBI Taxonomy" id="121224"/>
    <lineage>
        <taxon>Eukaryota</taxon>
        <taxon>Metazoa</taxon>
        <taxon>Ecdysozoa</taxon>
        <taxon>Arthropoda</taxon>
        <taxon>Hexapoda</taxon>
        <taxon>Insecta</taxon>
        <taxon>Pterygota</taxon>
        <taxon>Neoptera</taxon>
        <taxon>Paraneoptera</taxon>
        <taxon>Psocodea</taxon>
        <taxon>Phthiraptera</taxon>
        <taxon>Anoplura</taxon>
        <taxon>Pediculidae</taxon>
        <taxon>Pediculus</taxon>
    </lineage>
</organism>
<comment type="function">
    <text evidence="1">Catalyzes the dehydration of the S-form of NAD(P)HX at the expense of ATP, which is converted to ADP. Together with NAD(P)HX epimerase, which catalyzes the epimerization of the S- and R-forms, the enzyme allows the repair of both epimers of NAD(P)HX, a damaged form of NAD(P)H that is a result of enzymatic or heat-dependent hydration.</text>
</comment>
<comment type="catalytic activity">
    <reaction evidence="1">
        <text>(6S)-NADHX + ATP = ADP + phosphate + NADH + H(+)</text>
        <dbReference type="Rhea" id="RHEA:19017"/>
        <dbReference type="ChEBI" id="CHEBI:15378"/>
        <dbReference type="ChEBI" id="CHEBI:30616"/>
        <dbReference type="ChEBI" id="CHEBI:43474"/>
        <dbReference type="ChEBI" id="CHEBI:57945"/>
        <dbReference type="ChEBI" id="CHEBI:64074"/>
        <dbReference type="ChEBI" id="CHEBI:456216"/>
        <dbReference type="EC" id="4.2.1.93"/>
    </reaction>
</comment>
<comment type="catalytic activity">
    <reaction>
        <text>(6S)-NADPHX + ATP = ADP + phosphate + NADPH + H(+)</text>
        <dbReference type="Rhea" id="RHEA:32231"/>
        <dbReference type="ChEBI" id="CHEBI:15378"/>
        <dbReference type="ChEBI" id="CHEBI:30616"/>
        <dbReference type="ChEBI" id="CHEBI:43474"/>
        <dbReference type="ChEBI" id="CHEBI:57783"/>
        <dbReference type="ChEBI" id="CHEBI:64076"/>
        <dbReference type="ChEBI" id="CHEBI:456216"/>
        <dbReference type="EC" id="4.2.1.93"/>
    </reaction>
</comment>
<comment type="cofactor">
    <cofactor evidence="1">
        <name>Mg(2+)</name>
        <dbReference type="ChEBI" id="CHEBI:18420"/>
    </cofactor>
</comment>
<comment type="similarity">
    <text evidence="1">Belongs to the NnrD/CARKD family.</text>
</comment>
<keyword id="KW-0067">ATP-binding</keyword>
<keyword id="KW-0456">Lyase</keyword>
<keyword id="KW-0520">NAD</keyword>
<keyword id="KW-0521">NADP</keyword>
<keyword id="KW-0547">Nucleotide-binding</keyword>
<keyword id="KW-0597">Phosphoprotein</keyword>
<keyword id="KW-1185">Reference proteome</keyword>
<protein>
    <recommendedName>
        <fullName evidence="1">ATP-dependent (S)-NAD(P)H-hydrate dehydratase</fullName>
        <ecNumber evidence="1">4.2.1.93</ecNumber>
    </recommendedName>
    <alternativeName>
        <fullName evidence="1">ATP-dependent NAD(P)HX dehydratase</fullName>
    </alternativeName>
</protein>
<reference key="1">
    <citation type="journal article" date="2010" name="Proc. Natl. Acad. Sci. U.S.A.">
        <title>Genome sequences of the human body louse and its primary endosymbiont provide insights into the permanent parasitic lifestyle.</title>
        <authorList>
            <person name="Kirkness E.F."/>
            <person name="Haas B.J."/>
            <person name="Sun W."/>
            <person name="Braig H.R."/>
            <person name="Perotti M.A."/>
            <person name="Clark J.M."/>
            <person name="Lee S.H."/>
            <person name="Robertson H.M."/>
            <person name="Kennedy R.C."/>
            <person name="Elhaik E."/>
            <person name="Gerlach D."/>
            <person name="Kriventseva E.V."/>
            <person name="Elsik C.G."/>
            <person name="Graur D."/>
            <person name="Hill C.A."/>
            <person name="Veenstra J.A."/>
            <person name="Walenz B."/>
            <person name="Tubio J.M."/>
            <person name="Ribeiro J.M."/>
            <person name="Rozas J."/>
            <person name="Johnston J.S."/>
            <person name="Reese J.T."/>
            <person name="Popadic A."/>
            <person name="Tojo M."/>
            <person name="Raoult D."/>
            <person name="Reed D.L."/>
            <person name="Tomoyasu Y."/>
            <person name="Krause E."/>
            <person name="Mittapalli O."/>
            <person name="Margam V.M."/>
            <person name="Li H.M."/>
            <person name="Meyer J.M."/>
            <person name="Johnson R.M."/>
            <person name="Romero-Severson J."/>
            <person name="Vanzee J.P."/>
            <person name="Alvarez-Ponce D."/>
            <person name="Vieira F.G."/>
            <person name="Aguade M."/>
            <person name="Guirao-Rico S."/>
            <person name="Anzola J.M."/>
            <person name="Yoon K.S."/>
            <person name="Strycharz J.P."/>
            <person name="Unger M.F."/>
            <person name="Christley S."/>
            <person name="Lobo N.F."/>
            <person name="Seufferheld M.J."/>
            <person name="Wang N."/>
            <person name="Dasch G.A."/>
            <person name="Struchiner C.J."/>
            <person name="Madey G."/>
            <person name="Hannick L.I."/>
            <person name="Bidwell S."/>
            <person name="Joardar V."/>
            <person name="Caler E."/>
            <person name="Shao R."/>
            <person name="Barker S.C."/>
            <person name="Cameron S."/>
            <person name="Bruggner R.V."/>
            <person name="Regier A."/>
            <person name="Johnson J."/>
            <person name="Viswanathan L."/>
            <person name="Utterback T.R."/>
            <person name="Sutton G.G."/>
            <person name="Lawson D."/>
            <person name="Waterhouse R.M."/>
            <person name="Venter J.C."/>
            <person name="Strausberg R.L."/>
            <person name="Berenbaum M.R."/>
            <person name="Collins F.H."/>
            <person name="Zdobnov E.M."/>
            <person name="Pittendrigh B.R."/>
        </authorList>
    </citation>
    <scope>NUCLEOTIDE SEQUENCE [LARGE SCALE GENOMIC DNA]</scope>
    <source>
        <strain>USDA</strain>
    </source>
</reference>
<evidence type="ECO:0000255" key="1">
    <source>
        <dbReference type="HAMAP-Rule" id="MF_03157"/>
    </source>
</evidence>
<proteinExistence type="inferred from homology"/>
<accession>E0VSF4</accession>
<feature type="chain" id="PRO_0000416168" description="ATP-dependent (S)-NAD(P)H-hydrate dehydratase">
    <location>
        <begin position="1"/>
        <end position="300"/>
    </location>
</feature>
<feature type="domain" description="YjeF C-terminal" evidence="1">
    <location>
        <begin position="6"/>
        <end position="297"/>
    </location>
</feature>
<feature type="binding site" evidence="1">
    <location>
        <position position="106"/>
    </location>
    <ligand>
        <name>(6S)-NADPHX</name>
        <dbReference type="ChEBI" id="CHEBI:64076"/>
    </ligand>
</feature>
<feature type="binding site" evidence="1">
    <location>
        <begin position="158"/>
        <end position="164"/>
    </location>
    <ligand>
        <name>(6S)-NADPHX</name>
        <dbReference type="ChEBI" id="CHEBI:64076"/>
    </ligand>
</feature>
<feature type="binding site" evidence="1">
    <location>
        <begin position="188"/>
        <end position="192"/>
    </location>
    <ligand>
        <name>ATP</name>
        <dbReference type="ChEBI" id="CHEBI:30616"/>
    </ligand>
</feature>
<feature type="binding site" evidence="1">
    <location>
        <begin position="218"/>
        <end position="227"/>
    </location>
    <ligand>
        <name>ATP</name>
        <dbReference type="ChEBI" id="CHEBI:30616"/>
    </ligand>
</feature>
<feature type="binding site" evidence="1">
    <location>
        <position position="228"/>
    </location>
    <ligand>
        <name>(6S)-NADPHX</name>
        <dbReference type="ChEBI" id="CHEBI:64076"/>
    </ligand>
</feature>
<sequence>MSNCKYAGKIKEFIPKLTPTLHKGQCGRIGIIGGSAEYTGAPYFAAISALKLGADLVYVFCCKEAGPVIKSYSPELIVLPILDSGNVTEKIENWLTRLHALVIGPGLGTKPVNIIRLCNERSKLSVLPLIIDADGLRIVNDNLDLIKKYHGPVILTPNEVEFKRLSSKFSNTEAINVASSLNSVLIQKGSTDVITNGINFDEFDFTFDDVTITCETFGSNRRCGGQGDILSGCIATFVAWFELFKSNNTFIIPLSSVSCYGACAVTKTCSKLAFQKFGRSMTASDMIGCIHQSFTSLFGS</sequence>
<gene>
    <name type="ORF">PHUM417680</name>
</gene>
<dbReference type="EC" id="4.2.1.93" evidence="1"/>
<dbReference type="EMBL" id="DS235750">
    <property type="protein sequence ID" value="EEB16310.1"/>
    <property type="molecule type" value="Genomic_DNA"/>
</dbReference>
<dbReference type="RefSeq" id="XP_002429048.1">
    <property type="nucleotide sequence ID" value="XM_002429003.1"/>
</dbReference>
<dbReference type="SMR" id="E0VSF4"/>
<dbReference type="FunCoup" id="E0VSF4">
    <property type="interactions" value="253"/>
</dbReference>
<dbReference type="STRING" id="121224.E0VSF4"/>
<dbReference type="EnsemblMetazoa" id="PHUM417680-RA">
    <property type="protein sequence ID" value="PHUM417680-PA"/>
    <property type="gene ID" value="PHUM417680"/>
</dbReference>
<dbReference type="KEGG" id="phu:Phum_PHUM417680"/>
<dbReference type="CTD" id="8234427"/>
<dbReference type="VEuPathDB" id="VectorBase:PHUM417680"/>
<dbReference type="eggNOG" id="KOG3974">
    <property type="taxonomic scope" value="Eukaryota"/>
</dbReference>
<dbReference type="HOGENOM" id="CLU_030651_3_0_1"/>
<dbReference type="InParanoid" id="E0VSF4"/>
<dbReference type="OMA" id="WRAAYHN"/>
<dbReference type="OrthoDB" id="8110916at2759"/>
<dbReference type="PhylomeDB" id="E0VSF4"/>
<dbReference type="Proteomes" id="UP000009046">
    <property type="component" value="Unassembled WGS sequence"/>
</dbReference>
<dbReference type="GO" id="GO:0005524">
    <property type="term" value="F:ATP binding"/>
    <property type="evidence" value="ECO:0007669"/>
    <property type="project" value="UniProtKB-KW"/>
</dbReference>
<dbReference type="GO" id="GO:0047453">
    <property type="term" value="F:ATP-dependent NAD(P)H-hydrate dehydratase activity"/>
    <property type="evidence" value="ECO:0007669"/>
    <property type="project" value="UniProtKB-UniRule"/>
</dbReference>
<dbReference type="GO" id="GO:0110051">
    <property type="term" value="P:metabolite repair"/>
    <property type="evidence" value="ECO:0007669"/>
    <property type="project" value="TreeGrafter"/>
</dbReference>
<dbReference type="GO" id="GO:0046496">
    <property type="term" value="P:nicotinamide nucleotide metabolic process"/>
    <property type="evidence" value="ECO:0007669"/>
    <property type="project" value="UniProtKB-UniRule"/>
</dbReference>
<dbReference type="CDD" id="cd01171">
    <property type="entry name" value="YXKO-related"/>
    <property type="match status" value="1"/>
</dbReference>
<dbReference type="Gene3D" id="3.40.1190.20">
    <property type="match status" value="1"/>
</dbReference>
<dbReference type="HAMAP" id="MF_01965">
    <property type="entry name" value="NADHX_dehydratase"/>
    <property type="match status" value="1"/>
</dbReference>
<dbReference type="InterPro" id="IPR000631">
    <property type="entry name" value="CARKD"/>
</dbReference>
<dbReference type="InterPro" id="IPR029056">
    <property type="entry name" value="Ribokinase-like"/>
</dbReference>
<dbReference type="NCBIfam" id="TIGR00196">
    <property type="entry name" value="yjeF_cterm"/>
    <property type="match status" value="1"/>
</dbReference>
<dbReference type="PANTHER" id="PTHR12592:SF0">
    <property type="entry name" value="ATP-DEPENDENT (S)-NAD(P)H-HYDRATE DEHYDRATASE"/>
    <property type="match status" value="1"/>
</dbReference>
<dbReference type="PANTHER" id="PTHR12592">
    <property type="entry name" value="ATP-DEPENDENT (S)-NAD(P)H-HYDRATE DEHYDRATASE FAMILY MEMBER"/>
    <property type="match status" value="1"/>
</dbReference>
<dbReference type="Pfam" id="PF01256">
    <property type="entry name" value="Carb_kinase"/>
    <property type="match status" value="1"/>
</dbReference>
<dbReference type="SUPFAM" id="SSF53613">
    <property type="entry name" value="Ribokinase-like"/>
    <property type="match status" value="1"/>
</dbReference>
<dbReference type="PROSITE" id="PS51383">
    <property type="entry name" value="YJEF_C_3"/>
    <property type="match status" value="1"/>
</dbReference>
<name>NNRD_PEDHC</name>